<keyword id="KW-0963">Cytoplasm</keyword>
<keyword id="KW-0210">Decarboxylase</keyword>
<keyword id="KW-0456">Lyase</keyword>
<keyword id="KW-0627">Porphyrin biosynthesis</keyword>
<dbReference type="EC" id="4.1.1.37" evidence="1"/>
<dbReference type="EMBL" id="BX640451">
    <property type="protein sequence ID" value="CAE34964.1"/>
    <property type="molecule type" value="Genomic_DNA"/>
</dbReference>
<dbReference type="RefSeq" id="WP_003815337.1">
    <property type="nucleotide sequence ID" value="NC_002927.3"/>
</dbReference>
<dbReference type="SMR" id="Q7WEN2"/>
<dbReference type="GeneID" id="56476899"/>
<dbReference type="KEGG" id="bbr:BB4602"/>
<dbReference type="eggNOG" id="COG0407">
    <property type="taxonomic scope" value="Bacteria"/>
</dbReference>
<dbReference type="HOGENOM" id="CLU_040933_0_0_4"/>
<dbReference type="UniPathway" id="UPA00251">
    <property type="reaction ID" value="UER00321"/>
</dbReference>
<dbReference type="Proteomes" id="UP000001027">
    <property type="component" value="Chromosome"/>
</dbReference>
<dbReference type="GO" id="GO:0005829">
    <property type="term" value="C:cytosol"/>
    <property type="evidence" value="ECO:0007669"/>
    <property type="project" value="TreeGrafter"/>
</dbReference>
<dbReference type="GO" id="GO:0004853">
    <property type="term" value="F:uroporphyrinogen decarboxylase activity"/>
    <property type="evidence" value="ECO:0007669"/>
    <property type="project" value="UniProtKB-UniRule"/>
</dbReference>
<dbReference type="GO" id="GO:0019353">
    <property type="term" value="P:protoporphyrinogen IX biosynthetic process from glutamate"/>
    <property type="evidence" value="ECO:0007669"/>
    <property type="project" value="TreeGrafter"/>
</dbReference>
<dbReference type="CDD" id="cd00717">
    <property type="entry name" value="URO-D"/>
    <property type="match status" value="1"/>
</dbReference>
<dbReference type="FunFam" id="3.20.20.210:FF:000001">
    <property type="entry name" value="Uroporphyrinogen decarboxylase"/>
    <property type="match status" value="1"/>
</dbReference>
<dbReference type="Gene3D" id="3.20.20.210">
    <property type="match status" value="1"/>
</dbReference>
<dbReference type="HAMAP" id="MF_00218">
    <property type="entry name" value="URO_D"/>
    <property type="match status" value="1"/>
</dbReference>
<dbReference type="InterPro" id="IPR038071">
    <property type="entry name" value="UROD/MetE-like_sf"/>
</dbReference>
<dbReference type="InterPro" id="IPR006361">
    <property type="entry name" value="Uroporphyrinogen_deCO2ase_HemE"/>
</dbReference>
<dbReference type="InterPro" id="IPR000257">
    <property type="entry name" value="Uroporphyrinogen_deCOase"/>
</dbReference>
<dbReference type="NCBIfam" id="TIGR01464">
    <property type="entry name" value="hemE"/>
    <property type="match status" value="1"/>
</dbReference>
<dbReference type="PANTHER" id="PTHR21091">
    <property type="entry name" value="METHYLTETRAHYDROFOLATE:HOMOCYSTEINE METHYLTRANSFERASE RELATED"/>
    <property type="match status" value="1"/>
</dbReference>
<dbReference type="PANTHER" id="PTHR21091:SF169">
    <property type="entry name" value="UROPORPHYRINOGEN DECARBOXYLASE"/>
    <property type="match status" value="1"/>
</dbReference>
<dbReference type="Pfam" id="PF01208">
    <property type="entry name" value="URO-D"/>
    <property type="match status" value="1"/>
</dbReference>
<dbReference type="SUPFAM" id="SSF51726">
    <property type="entry name" value="UROD/MetE-like"/>
    <property type="match status" value="1"/>
</dbReference>
<dbReference type="PROSITE" id="PS00906">
    <property type="entry name" value="UROD_1"/>
    <property type="match status" value="1"/>
</dbReference>
<dbReference type="PROSITE" id="PS00907">
    <property type="entry name" value="UROD_2"/>
    <property type="match status" value="1"/>
</dbReference>
<reference key="1">
    <citation type="journal article" date="2003" name="Nat. Genet.">
        <title>Comparative analysis of the genome sequences of Bordetella pertussis, Bordetella parapertussis and Bordetella bronchiseptica.</title>
        <authorList>
            <person name="Parkhill J."/>
            <person name="Sebaihia M."/>
            <person name="Preston A."/>
            <person name="Murphy L.D."/>
            <person name="Thomson N.R."/>
            <person name="Harris D.E."/>
            <person name="Holden M.T.G."/>
            <person name="Churcher C.M."/>
            <person name="Bentley S.D."/>
            <person name="Mungall K.L."/>
            <person name="Cerdeno-Tarraga A.-M."/>
            <person name="Temple L."/>
            <person name="James K.D."/>
            <person name="Harris B."/>
            <person name="Quail M.A."/>
            <person name="Achtman M."/>
            <person name="Atkin R."/>
            <person name="Baker S."/>
            <person name="Basham D."/>
            <person name="Bason N."/>
            <person name="Cherevach I."/>
            <person name="Chillingworth T."/>
            <person name="Collins M."/>
            <person name="Cronin A."/>
            <person name="Davis P."/>
            <person name="Doggett J."/>
            <person name="Feltwell T."/>
            <person name="Goble A."/>
            <person name="Hamlin N."/>
            <person name="Hauser H."/>
            <person name="Holroyd S."/>
            <person name="Jagels K."/>
            <person name="Leather S."/>
            <person name="Moule S."/>
            <person name="Norberczak H."/>
            <person name="O'Neil S."/>
            <person name="Ormond D."/>
            <person name="Price C."/>
            <person name="Rabbinowitsch E."/>
            <person name="Rutter S."/>
            <person name="Sanders M."/>
            <person name="Saunders D."/>
            <person name="Seeger K."/>
            <person name="Sharp S."/>
            <person name="Simmonds M."/>
            <person name="Skelton J."/>
            <person name="Squares R."/>
            <person name="Squares S."/>
            <person name="Stevens K."/>
            <person name="Unwin L."/>
            <person name="Whitehead S."/>
            <person name="Barrell B.G."/>
            <person name="Maskell D.J."/>
        </authorList>
    </citation>
    <scope>NUCLEOTIDE SEQUENCE [LARGE SCALE GENOMIC DNA]</scope>
    <source>
        <strain>ATCC BAA-588 / NCTC 13252 / RB50</strain>
    </source>
</reference>
<comment type="function">
    <text evidence="1">Catalyzes the decarboxylation of four acetate groups of uroporphyrinogen-III to yield coproporphyrinogen-III.</text>
</comment>
<comment type="catalytic activity">
    <reaction evidence="1">
        <text>uroporphyrinogen III + 4 H(+) = coproporphyrinogen III + 4 CO2</text>
        <dbReference type="Rhea" id="RHEA:19865"/>
        <dbReference type="ChEBI" id="CHEBI:15378"/>
        <dbReference type="ChEBI" id="CHEBI:16526"/>
        <dbReference type="ChEBI" id="CHEBI:57308"/>
        <dbReference type="ChEBI" id="CHEBI:57309"/>
        <dbReference type="EC" id="4.1.1.37"/>
    </reaction>
</comment>
<comment type="pathway">
    <text evidence="1">Porphyrin-containing compound metabolism; protoporphyrin-IX biosynthesis; coproporphyrinogen-III from 5-aminolevulinate: step 4/4.</text>
</comment>
<comment type="subunit">
    <text evidence="1">Homodimer.</text>
</comment>
<comment type="subcellular location">
    <subcellularLocation>
        <location evidence="1">Cytoplasm</location>
    </subcellularLocation>
</comment>
<comment type="similarity">
    <text evidence="1">Belongs to the uroporphyrinogen decarboxylase family.</text>
</comment>
<organism>
    <name type="scientific">Bordetella bronchiseptica (strain ATCC BAA-588 / NCTC 13252 / RB50)</name>
    <name type="common">Alcaligenes bronchisepticus</name>
    <dbReference type="NCBI Taxonomy" id="257310"/>
    <lineage>
        <taxon>Bacteria</taxon>
        <taxon>Pseudomonadati</taxon>
        <taxon>Pseudomonadota</taxon>
        <taxon>Betaproteobacteria</taxon>
        <taxon>Burkholderiales</taxon>
        <taxon>Alcaligenaceae</taxon>
        <taxon>Bordetella</taxon>
    </lineage>
</organism>
<name>DCUP_BORBR</name>
<sequence>MSVAPLKNDVFLRALLREPVPYTPIWLMRQAGRYLPEYNATRARAGSFMGLAQNPDYACEVTLQPLARYPLDAAILFSDILTVPHAMGLGLDFAPGEGPRFAHPVRDESDVAKLAVPDMDSLRYVFDAVRTIRRELDGRVPLIGFAGSPWTIACYMVEGRGSDDYRLIKSMLYGRPDLLHRILEINAEATRHYLNAQIDAGAQAVMLFDSWGGVLADGLFQQFSLAYTRRVVEGLTREREGRRVPVIVFTKGGGQWLEEIAACGCDAVGLDWTVNLGTARRRVADAVALQGNLDPMTLFGGAQAVRAEARRTLDAFGPVGKGGHVFNLGHGISQYSPPEVVSELVDEVHTYSRALHAG</sequence>
<evidence type="ECO:0000255" key="1">
    <source>
        <dbReference type="HAMAP-Rule" id="MF_00218"/>
    </source>
</evidence>
<feature type="chain" id="PRO_0000187585" description="Uroporphyrinogen decarboxylase">
    <location>
        <begin position="1"/>
        <end position="358"/>
    </location>
</feature>
<feature type="binding site" evidence="1">
    <location>
        <begin position="29"/>
        <end position="33"/>
    </location>
    <ligand>
        <name>substrate</name>
    </ligand>
</feature>
<feature type="binding site" evidence="1">
    <location>
        <position position="48"/>
    </location>
    <ligand>
        <name>substrate</name>
    </ligand>
</feature>
<feature type="binding site" evidence="1">
    <location>
        <position position="79"/>
    </location>
    <ligand>
        <name>substrate</name>
    </ligand>
</feature>
<feature type="binding site" evidence="1">
    <location>
        <position position="155"/>
    </location>
    <ligand>
        <name>substrate</name>
    </ligand>
</feature>
<feature type="binding site" evidence="1">
    <location>
        <position position="210"/>
    </location>
    <ligand>
        <name>substrate</name>
    </ligand>
</feature>
<feature type="binding site" evidence="1">
    <location>
        <position position="330"/>
    </location>
    <ligand>
        <name>substrate</name>
    </ligand>
</feature>
<feature type="site" description="Transition state stabilizer" evidence="1">
    <location>
        <position position="79"/>
    </location>
</feature>
<gene>
    <name evidence="1" type="primary">hemE</name>
    <name type="ordered locus">BB4602</name>
</gene>
<proteinExistence type="inferred from homology"/>
<accession>Q7WEN2</accession>
<protein>
    <recommendedName>
        <fullName evidence="1">Uroporphyrinogen decarboxylase</fullName>
        <shortName evidence="1">UPD</shortName>
        <shortName evidence="1">URO-D</shortName>
        <ecNumber evidence="1">4.1.1.37</ecNumber>
    </recommendedName>
</protein>